<feature type="chain" id="PRO_0000235660" description="5'-nucleotidase SurE 1">
    <location>
        <begin position="1"/>
        <end position="251"/>
    </location>
</feature>
<feature type="binding site" evidence="1">
    <location>
        <position position="8"/>
    </location>
    <ligand>
        <name>a divalent metal cation</name>
        <dbReference type="ChEBI" id="CHEBI:60240"/>
    </ligand>
</feature>
<feature type="binding site" evidence="1">
    <location>
        <position position="9"/>
    </location>
    <ligand>
        <name>a divalent metal cation</name>
        <dbReference type="ChEBI" id="CHEBI:60240"/>
    </ligand>
</feature>
<feature type="binding site" evidence="1">
    <location>
        <position position="39"/>
    </location>
    <ligand>
        <name>a divalent metal cation</name>
        <dbReference type="ChEBI" id="CHEBI:60240"/>
    </ligand>
</feature>
<feature type="binding site" evidence="1">
    <location>
        <position position="95"/>
    </location>
    <ligand>
        <name>a divalent metal cation</name>
        <dbReference type="ChEBI" id="CHEBI:60240"/>
    </ligand>
</feature>
<protein>
    <recommendedName>
        <fullName evidence="1">5'-nucleotidase SurE 1</fullName>
        <ecNumber evidence="1">3.1.3.5</ecNumber>
    </recommendedName>
    <alternativeName>
        <fullName evidence="1">Nucleoside 5'-monophosphate phosphohydrolase 1</fullName>
    </alternativeName>
</protein>
<gene>
    <name evidence="1" type="primary">surE1</name>
    <name type="ordered locus">TT_C1625</name>
</gene>
<comment type="function">
    <text evidence="1">Nucleotidase that shows phosphatase activity on nucleoside 5'-monophosphates.</text>
</comment>
<comment type="catalytic activity">
    <reaction evidence="1">
        <text>a ribonucleoside 5'-phosphate + H2O = a ribonucleoside + phosphate</text>
        <dbReference type="Rhea" id="RHEA:12484"/>
        <dbReference type="ChEBI" id="CHEBI:15377"/>
        <dbReference type="ChEBI" id="CHEBI:18254"/>
        <dbReference type="ChEBI" id="CHEBI:43474"/>
        <dbReference type="ChEBI" id="CHEBI:58043"/>
        <dbReference type="EC" id="3.1.3.5"/>
    </reaction>
</comment>
<comment type="cofactor">
    <cofactor evidence="1">
        <name>a divalent metal cation</name>
        <dbReference type="ChEBI" id="CHEBI:60240"/>
    </cofactor>
    <text evidence="1">Binds 1 divalent metal cation per subunit.</text>
</comment>
<comment type="subcellular location">
    <subcellularLocation>
        <location evidence="1">Cytoplasm</location>
    </subcellularLocation>
</comment>
<comment type="similarity">
    <text evidence="1">Belongs to the SurE nucleotidase family.</text>
</comment>
<organism>
    <name type="scientific">Thermus thermophilus (strain ATCC BAA-163 / DSM 7039 / HB27)</name>
    <dbReference type="NCBI Taxonomy" id="262724"/>
    <lineage>
        <taxon>Bacteria</taxon>
        <taxon>Thermotogati</taxon>
        <taxon>Deinococcota</taxon>
        <taxon>Deinococci</taxon>
        <taxon>Thermales</taxon>
        <taxon>Thermaceae</taxon>
        <taxon>Thermus</taxon>
    </lineage>
</organism>
<reference key="1">
    <citation type="journal article" date="2004" name="Nat. Biotechnol.">
        <title>The genome sequence of the extreme thermophile Thermus thermophilus.</title>
        <authorList>
            <person name="Henne A."/>
            <person name="Brueggemann H."/>
            <person name="Raasch C."/>
            <person name="Wiezer A."/>
            <person name="Hartsch T."/>
            <person name="Liesegang H."/>
            <person name="Johann A."/>
            <person name="Lienard T."/>
            <person name="Gohl O."/>
            <person name="Martinez-Arias R."/>
            <person name="Jacobi C."/>
            <person name="Starkuviene V."/>
            <person name="Schlenczeck S."/>
            <person name="Dencker S."/>
            <person name="Huber R."/>
            <person name="Klenk H.-P."/>
            <person name="Kramer W."/>
            <person name="Merkl R."/>
            <person name="Gottschalk G."/>
            <person name="Fritz H.-J."/>
        </authorList>
    </citation>
    <scope>NUCLEOTIDE SEQUENCE [LARGE SCALE GENOMIC DNA]</scope>
    <source>
        <strain>ATCC BAA-163 / DSM 7039 / HB27</strain>
    </source>
</reference>
<name>SURE1_THET2</name>
<accession>Q72H70</accession>
<dbReference type="EC" id="3.1.3.5" evidence="1"/>
<dbReference type="EMBL" id="AE017221">
    <property type="protein sequence ID" value="AAS81967.1"/>
    <property type="molecule type" value="Genomic_DNA"/>
</dbReference>
<dbReference type="RefSeq" id="WP_011173994.1">
    <property type="nucleotide sequence ID" value="NC_005835.1"/>
</dbReference>
<dbReference type="SMR" id="Q72H70"/>
<dbReference type="KEGG" id="tth:TT_C1625"/>
<dbReference type="eggNOG" id="COG0496">
    <property type="taxonomic scope" value="Bacteria"/>
</dbReference>
<dbReference type="HOGENOM" id="CLU_045192_1_3_0"/>
<dbReference type="OrthoDB" id="9780815at2"/>
<dbReference type="Proteomes" id="UP000000592">
    <property type="component" value="Chromosome"/>
</dbReference>
<dbReference type="GO" id="GO:0005737">
    <property type="term" value="C:cytoplasm"/>
    <property type="evidence" value="ECO:0007669"/>
    <property type="project" value="UniProtKB-SubCell"/>
</dbReference>
<dbReference type="GO" id="GO:0008254">
    <property type="term" value="F:3'-nucleotidase activity"/>
    <property type="evidence" value="ECO:0007669"/>
    <property type="project" value="TreeGrafter"/>
</dbReference>
<dbReference type="GO" id="GO:0008253">
    <property type="term" value="F:5'-nucleotidase activity"/>
    <property type="evidence" value="ECO:0007669"/>
    <property type="project" value="UniProtKB-UniRule"/>
</dbReference>
<dbReference type="GO" id="GO:0004309">
    <property type="term" value="F:exopolyphosphatase activity"/>
    <property type="evidence" value="ECO:0007669"/>
    <property type="project" value="TreeGrafter"/>
</dbReference>
<dbReference type="GO" id="GO:0046872">
    <property type="term" value="F:metal ion binding"/>
    <property type="evidence" value="ECO:0007669"/>
    <property type="project" value="UniProtKB-UniRule"/>
</dbReference>
<dbReference type="GO" id="GO:0000166">
    <property type="term" value="F:nucleotide binding"/>
    <property type="evidence" value="ECO:0007669"/>
    <property type="project" value="UniProtKB-KW"/>
</dbReference>
<dbReference type="FunFam" id="3.40.1210.10:FF:000001">
    <property type="entry name" value="5'/3'-nucleotidase SurE"/>
    <property type="match status" value="1"/>
</dbReference>
<dbReference type="Gene3D" id="3.40.1210.10">
    <property type="entry name" value="Survival protein SurE-like phosphatase/nucleotidase"/>
    <property type="match status" value="1"/>
</dbReference>
<dbReference type="HAMAP" id="MF_00060">
    <property type="entry name" value="SurE"/>
    <property type="match status" value="1"/>
</dbReference>
<dbReference type="InterPro" id="IPR030048">
    <property type="entry name" value="SurE"/>
</dbReference>
<dbReference type="InterPro" id="IPR002828">
    <property type="entry name" value="SurE-like_Pase/nucleotidase"/>
</dbReference>
<dbReference type="InterPro" id="IPR036523">
    <property type="entry name" value="SurE-like_sf"/>
</dbReference>
<dbReference type="NCBIfam" id="NF001490">
    <property type="entry name" value="PRK00346.1-4"/>
    <property type="match status" value="1"/>
</dbReference>
<dbReference type="NCBIfam" id="TIGR00087">
    <property type="entry name" value="surE"/>
    <property type="match status" value="1"/>
</dbReference>
<dbReference type="PANTHER" id="PTHR30457">
    <property type="entry name" value="5'-NUCLEOTIDASE SURE"/>
    <property type="match status" value="1"/>
</dbReference>
<dbReference type="PANTHER" id="PTHR30457:SF12">
    <property type="entry name" value="5'_3'-NUCLEOTIDASE SURE"/>
    <property type="match status" value="1"/>
</dbReference>
<dbReference type="Pfam" id="PF01975">
    <property type="entry name" value="SurE"/>
    <property type="match status" value="1"/>
</dbReference>
<dbReference type="SUPFAM" id="SSF64167">
    <property type="entry name" value="SurE-like"/>
    <property type="match status" value="1"/>
</dbReference>
<proteinExistence type="inferred from homology"/>
<sequence length="251" mass="26493">MRILVSNDDGIFSPGIKALGLAMRALGEVFVVAPDMEQSAVGHGITVRRPLRFKHTQSAGFGEIPAYRVDGTPADCVVLGVHLLGRPDLVVSGINLGVNLGLDLTHSGTVAAALEGASLGIPSIAFSLDTSGEVLDFQEAARWALAIARAVGERGLPPGVLLNVNFPASRPKGLLVTRLSTHRFEDQVVERLDPEGKPYYWIAGTPAGEEEEGTDLWAVRRGYVSVTPVSLDLTAHGFLEALSGLLEGVAP</sequence>
<keyword id="KW-0963">Cytoplasm</keyword>
<keyword id="KW-0378">Hydrolase</keyword>
<keyword id="KW-0479">Metal-binding</keyword>
<keyword id="KW-0547">Nucleotide-binding</keyword>
<evidence type="ECO:0000255" key="1">
    <source>
        <dbReference type="HAMAP-Rule" id="MF_00060"/>
    </source>
</evidence>